<feature type="chain" id="PRO_1000001774" description="Phosphate acyltransferase">
    <location>
        <begin position="1"/>
        <end position="333"/>
    </location>
</feature>
<sequence length="333" mass="36126">MRTIAIDAMGGENAPEAIVKAVLKAKNEMPETKFLLFGDKEQLRELIPADQINDQLGVVATTETIADEDEPVKAIRRKKDSSMVVAANFVKEGKADALLSLGNTGALLACGIFIIGRIKGIVRPGLMPTLPVQNSDDGFNMVDVGANAKSKPEYLLQWAEMASYYAQKIRGIDNPRIALLNNGAESDKGDDVHQKAYELLKDSDLNFVGNIEGNELLLGNADVVVTDGFTGNAVLKNIEGTSSVILHLLKDSLLNGNLMTKMGALMVKGSLASLKSKFDTAKYGGAVLLGVNAPVVKTHGRSNERPIYYTLKQVDKMIKEKLVEDFRDEFSEK</sequence>
<comment type="function">
    <text evidence="1">Catalyzes the reversible formation of acyl-phosphate (acyl-PO(4)) from acyl-[acyl-carrier-protein] (acyl-ACP). This enzyme utilizes acyl-ACP as fatty acyl donor, but not acyl-CoA.</text>
</comment>
<comment type="catalytic activity">
    <reaction evidence="1">
        <text>a fatty acyl-[ACP] + phosphate = an acyl phosphate + holo-[ACP]</text>
        <dbReference type="Rhea" id="RHEA:42292"/>
        <dbReference type="Rhea" id="RHEA-COMP:9685"/>
        <dbReference type="Rhea" id="RHEA-COMP:14125"/>
        <dbReference type="ChEBI" id="CHEBI:43474"/>
        <dbReference type="ChEBI" id="CHEBI:59918"/>
        <dbReference type="ChEBI" id="CHEBI:64479"/>
        <dbReference type="ChEBI" id="CHEBI:138651"/>
        <dbReference type="EC" id="2.3.1.274"/>
    </reaction>
</comment>
<comment type="pathway">
    <text evidence="1">Lipid metabolism; phospholipid metabolism.</text>
</comment>
<comment type="subunit">
    <text evidence="1">Homodimer. Probably interacts with PlsY.</text>
</comment>
<comment type="subcellular location">
    <subcellularLocation>
        <location evidence="1">Cytoplasm</location>
    </subcellularLocation>
    <text evidence="1">Associated with the membrane possibly through PlsY.</text>
</comment>
<comment type="similarity">
    <text evidence="1">Belongs to the PlsX family.</text>
</comment>
<gene>
    <name evidence="1" type="primary">plsX</name>
    <name type="ordered locus">LBA1308</name>
</gene>
<accession>Q5FJI7</accession>
<evidence type="ECO:0000255" key="1">
    <source>
        <dbReference type="HAMAP-Rule" id="MF_00019"/>
    </source>
</evidence>
<reference key="1">
    <citation type="journal article" date="2005" name="Proc. Natl. Acad. Sci. U.S.A.">
        <title>Complete genome sequence of the probiotic lactic acid bacterium Lactobacillus acidophilus NCFM.</title>
        <authorList>
            <person name="Altermann E."/>
            <person name="Russell W.M."/>
            <person name="Azcarate-Peril M.A."/>
            <person name="Barrangou R."/>
            <person name="Buck B.L."/>
            <person name="McAuliffe O."/>
            <person name="Souther N."/>
            <person name="Dobson A."/>
            <person name="Duong T."/>
            <person name="Callanan M."/>
            <person name="Lick S."/>
            <person name="Hamrick A."/>
            <person name="Cano R."/>
            <person name="Klaenhammer T.R."/>
        </authorList>
    </citation>
    <scope>NUCLEOTIDE SEQUENCE [LARGE SCALE GENOMIC DNA]</scope>
    <source>
        <strain>ATCC 700396 / NCK56 / N2 / NCFM</strain>
    </source>
</reference>
<keyword id="KW-0963">Cytoplasm</keyword>
<keyword id="KW-0444">Lipid biosynthesis</keyword>
<keyword id="KW-0443">Lipid metabolism</keyword>
<keyword id="KW-0594">Phospholipid biosynthesis</keyword>
<keyword id="KW-1208">Phospholipid metabolism</keyword>
<keyword id="KW-1185">Reference proteome</keyword>
<keyword id="KW-0808">Transferase</keyword>
<proteinExistence type="inferred from homology"/>
<dbReference type="EC" id="2.3.1.274" evidence="1"/>
<dbReference type="EMBL" id="CP000033">
    <property type="protein sequence ID" value="AAV43137.1"/>
    <property type="molecule type" value="Genomic_DNA"/>
</dbReference>
<dbReference type="RefSeq" id="WP_003547901.1">
    <property type="nucleotide sequence ID" value="NC_006814.3"/>
</dbReference>
<dbReference type="RefSeq" id="YP_194168.1">
    <property type="nucleotide sequence ID" value="NC_006814.3"/>
</dbReference>
<dbReference type="SMR" id="Q5FJI7"/>
<dbReference type="STRING" id="272621.LBA1308"/>
<dbReference type="GeneID" id="93289607"/>
<dbReference type="KEGG" id="lac:LBA1308"/>
<dbReference type="PATRIC" id="fig|272621.13.peg.1238"/>
<dbReference type="eggNOG" id="COG0416">
    <property type="taxonomic scope" value="Bacteria"/>
</dbReference>
<dbReference type="HOGENOM" id="CLU_039379_1_1_9"/>
<dbReference type="OrthoDB" id="9806408at2"/>
<dbReference type="BioCyc" id="LACI272621:G1G49-1287-MONOMER"/>
<dbReference type="UniPathway" id="UPA00085"/>
<dbReference type="Proteomes" id="UP000006381">
    <property type="component" value="Chromosome"/>
</dbReference>
<dbReference type="GO" id="GO:0005737">
    <property type="term" value="C:cytoplasm"/>
    <property type="evidence" value="ECO:0007669"/>
    <property type="project" value="UniProtKB-SubCell"/>
</dbReference>
<dbReference type="GO" id="GO:0043811">
    <property type="term" value="F:phosphate:acyl-[acyl carrier protein] acyltransferase activity"/>
    <property type="evidence" value="ECO:0007669"/>
    <property type="project" value="UniProtKB-UniRule"/>
</dbReference>
<dbReference type="GO" id="GO:0006633">
    <property type="term" value="P:fatty acid biosynthetic process"/>
    <property type="evidence" value="ECO:0007669"/>
    <property type="project" value="UniProtKB-UniRule"/>
</dbReference>
<dbReference type="GO" id="GO:0008654">
    <property type="term" value="P:phospholipid biosynthetic process"/>
    <property type="evidence" value="ECO:0007669"/>
    <property type="project" value="UniProtKB-KW"/>
</dbReference>
<dbReference type="Gene3D" id="3.40.718.10">
    <property type="entry name" value="Isopropylmalate Dehydrogenase"/>
    <property type="match status" value="1"/>
</dbReference>
<dbReference type="HAMAP" id="MF_00019">
    <property type="entry name" value="PlsX"/>
    <property type="match status" value="1"/>
</dbReference>
<dbReference type="InterPro" id="IPR003664">
    <property type="entry name" value="FA_synthesis"/>
</dbReference>
<dbReference type="InterPro" id="IPR012281">
    <property type="entry name" value="Phospholipid_synth_PlsX-like"/>
</dbReference>
<dbReference type="NCBIfam" id="TIGR00182">
    <property type="entry name" value="plsX"/>
    <property type="match status" value="1"/>
</dbReference>
<dbReference type="PANTHER" id="PTHR30100">
    <property type="entry name" value="FATTY ACID/PHOSPHOLIPID SYNTHESIS PROTEIN PLSX"/>
    <property type="match status" value="1"/>
</dbReference>
<dbReference type="PANTHER" id="PTHR30100:SF1">
    <property type="entry name" value="PHOSPHATE ACYLTRANSFERASE"/>
    <property type="match status" value="1"/>
</dbReference>
<dbReference type="Pfam" id="PF02504">
    <property type="entry name" value="FA_synthesis"/>
    <property type="match status" value="1"/>
</dbReference>
<dbReference type="PIRSF" id="PIRSF002465">
    <property type="entry name" value="Phsphlp_syn_PlsX"/>
    <property type="match status" value="1"/>
</dbReference>
<dbReference type="SUPFAM" id="SSF53659">
    <property type="entry name" value="Isocitrate/Isopropylmalate dehydrogenase-like"/>
    <property type="match status" value="1"/>
</dbReference>
<name>PLSX_LACAC</name>
<protein>
    <recommendedName>
        <fullName evidence="1">Phosphate acyltransferase</fullName>
        <ecNumber evidence="1">2.3.1.274</ecNumber>
    </recommendedName>
    <alternativeName>
        <fullName evidence="1">Acyl-ACP phosphotransacylase</fullName>
    </alternativeName>
    <alternativeName>
        <fullName evidence="1">Acyl-[acyl-carrier-protein]--phosphate acyltransferase</fullName>
    </alternativeName>
    <alternativeName>
        <fullName evidence="1">Phosphate-acyl-ACP acyltransferase</fullName>
    </alternativeName>
</protein>
<organism>
    <name type="scientific">Lactobacillus acidophilus (strain ATCC 700396 / NCK56 / N2 / NCFM)</name>
    <dbReference type="NCBI Taxonomy" id="272621"/>
    <lineage>
        <taxon>Bacteria</taxon>
        <taxon>Bacillati</taxon>
        <taxon>Bacillota</taxon>
        <taxon>Bacilli</taxon>
        <taxon>Lactobacillales</taxon>
        <taxon>Lactobacillaceae</taxon>
        <taxon>Lactobacillus</taxon>
    </lineage>
</organism>